<dbReference type="EC" id="1.17.4.1"/>
<dbReference type="EMBL" id="Z38060">
    <property type="protein sequence ID" value="CAA86157.1"/>
    <property type="status" value="ALT_INIT"/>
    <property type="molecule type" value="Genomic_DNA"/>
</dbReference>
<dbReference type="EMBL" id="M58012">
    <property type="protein sequence ID" value="AAA34569.1"/>
    <property type="status" value="ALT_FRAME"/>
    <property type="molecule type" value="Genomic_DNA"/>
</dbReference>
<dbReference type="EMBL" id="BK006942">
    <property type="protein sequence ID" value="DAA08484.1"/>
    <property type="molecule type" value="Genomic_DNA"/>
</dbReference>
<dbReference type="PIR" id="S48413">
    <property type="entry name" value="WMBY3L"/>
</dbReference>
<dbReference type="RefSeq" id="NP_012198.3">
    <property type="nucleotide sequence ID" value="NM_001179416.3"/>
</dbReference>
<dbReference type="SMR" id="P21672"/>
<dbReference type="BioGRID" id="34926">
    <property type="interactions" value="115"/>
</dbReference>
<dbReference type="ComplexPortal" id="CPX-1103">
    <property type="entry name" value="Ribonucleoside-diphosphate reductase variant 2"/>
</dbReference>
<dbReference type="DIP" id="DIP-2563N"/>
<dbReference type="FunCoup" id="P21672">
    <property type="interactions" value="1324"/>
</dbReference>
<dbReference type="IntAct" id="P21672">
    <property type="interactions" value="49"/>
</dbReference>
<dbReference type="MINT" id="P21672"/>
<dbReference type="STRING" id="4932.YIL066C"/>
<dbReference type="GlyGen" id="P21672">
    <property type="glycosylation" value="2 sites"/>
</dbReference>
<dbReference type="iPTMnet" id="P21672"/>
<dbReference type="PaxDb" id="4932-YIL066C"/>
<dbReference type="PeptideAtlas" id="P21672"/>
<dbReference type="EnsemblFungi" id="YIL066C_mRNA">
    <property type="protein sequence ID" value="YIL066C"/>
    <property type="gene ID" value="YIL066C"/>
</dbReference>
<dbReference type="GeneID" id="854744"/>
<dbReference type="KEGG" id="sce:YIL066C"/>
<dbReference type="AGR" id="SGD:S000001328"/>
<dbReference type="SGD" id="S000001328">
    <property type="gene designation" value="RNR3"/>
</dbReference>
<dbReference type="VEuPathDB" id="FungiDB:YIL066C"/>
<dbReference type="eggNOG" id="KOG1112">
    <property type="taxonomic scope" value="Eukaryota"/>
</dbReference>
<dbReference type="GeneTree" id="ENSGT00910000144246"/>
<dbReference type="HOGENOM" id="CLU_000404_1_2_1"/>
<dbReference type="InParanoid" id="P21672"/>
<dbReference type="OMA" id="YTMNFIR"/>
<dbReference type="OrthoDB" id="3000483at2759"/>
<dbReference type="BioCyc" id="MetaCyc:YIL066C-MONOMER"/>
<dbReference type="BioCyc" id="YEAST:YIL066C-MONOMER"/>
<dbReference type="BioGRID-ORCS" id="854744">
    <property type="hits" value="3 hits in 10 CRISPR screens"/>
</dbReference>
<dbReference type="PRO" id="PR:P21672"/>
<dbReference type="Proteomes" id="UP000002311">
    <property type="component" value="Chromosome IX"/>
</dbReference>
<dbReference type="RNAct" id="P21672">
    <property type="molecule type" value="protein"/>
</dbReference>
<dbReference type="GO" id="GO:0005737">
    <property type="term" value="C:cytoplasm"/>
    <property type="evidence" value="ECO:0000314"/>
    <property type="project" value="SGD"/>
</dbReference>
<dbReference type="GO" id="GO:0005739">
    <property type="term" value="C:mitochondrion"/>
    <property type="evidence" value="ECO:0007005"/>
    <property type="project" value="SGD"/>
</dbReference>
<dbReference type="GO" id="GO:0005971">
    <property type="term" value="C:ribonucleoside-diphosphate reductase complex"/>
    <property type="evidence" value="ECO:0000250"/>
    <property type="project" value="ComplexPortal"/>
</dbReference>
<dbReference type="GO" id="GO:0005524">
    <property type="term" value="F:ATP binding"/>
    <property type="evidence" value="ECO:0000318"/>
    <property type="project" value="GO_Central"/>
</dbReference>
<dbReference type="GO" id="GO:0004748">
    <property type="term" value="F:ribonucleoside-diphosphate reductase activity, thioredoxin disulfide as acceptor"/>
    <property type="evidence" value="ECO:0007669"/>
    <property type="project" value="UniProtKB-EC"/>
</dbReference>
<dbReference type="GO" id="GO:0009263">
    <property type="term" value="P:deoxyribonucleotide biosynthetic process"/>
    <property type="evidence" value="ECO:0000314"/>
    <property type="project" value="SGD"/>
</dbReference>
<dbReference type="CDD" id="cd01679">
    <property type="entry name" value="RNR_I"/>
    <property type="match status" value="1"/>
</dbReference>
<dbReference type="FunFam" id="3.20.70.20:FF:000001">
    <property type="entry name" value="Ribonucleoside-diphosphate reductase"/>
    <property type="match status" value="1"/>
</dbReference>
<dbReference type="Gene3D" id="3.20.70.20">
    <property type="match status" value="1"/>
</dbReference>
<dbReference type="InterPro" id="IPR005144">
    <property type="entry name" value="ATP-cone_dom"/>
</dbReference>
<dbReference type="InterPro" id="IPR013346">
    <property type="entry name" value="NrdE_NrdA_C"/>
</dbReference>
<dbReference type="InterPro" id="IPR000788">
    <property type="entry name" value="RNR_lg_C"/>
</dbReference>
<dbReference type="InterPro" id="IPR013509">
    <property type="entry name" value="RNR_lsu_N"/>
</dbReference>
<dbReference type="InterPro" id="IPR008926">
    <property type="entry name" value="RNR_R1-su_N"/>
</dbReference>
<dbReference type="InterPro" id="IPR039718">
    <property type="entry name" value="Rrm1"/>
</dbReference>
<dbReference type="NCBIfam" id="TIGR02506">
    <property type="entry name" value="NrdE_NrdA"/>
    <property type="match status" value="1"/>
</dbReference>
<dbReference type="PANTHER" id="PTHR11573">
    <property type="entry name" value="RIBONUCLEOSIDE-DIPHOSPHATE REDUCTASE LARGE CHAIN"/>
    <property type="match status" value="1"/>
</dbReference>
<dbReference type="PANTHER" id="PTHR11573:SF6">
    <property type="entry name" value="RIBONUCLEOSIDE-DIPHOSPHATE REDUCTASE LARGE SUBUNIT"/>
    <property type="match status" value="1"/>
</dbReference>
<dbReference type="Pfam" id="PF03477">
    <property type="entry name" value="ATP-cone"/>
    <property type="match status" value="1"/>
</dbReference>
<dbReference type="Pfam" id="PF02867">
    <property type="entry name" value="Ribonuc_red_lgC"/>
    <property type="match status" value="1"/>
</dbReference>
<dbReference type="Pfam" id="PF00317">
    <property type="entry name" value="Ribonuc_red_lgN"/>
    <property type="match status" value="1"/>
</dbReference>
<dbReference type="PRINTS" id="PR01183">
    <property type="entry name" value="RIBORDTASEM1"/>
</dbReference>
<dbReference type="SUPFAM" id="SSF51998">
    <property type="entry name" value="PFL-like glycyl radical enzymes"/>
    <property type="match status" value="1"/>
</dbReference>
<dbReference type="SUPFAM" id="SSF48168">
    <property type="entry name" value="R1 subunit of ribonucleotide reductase, N-terminal domain"/>
    <property type="match status" value="1"/>
</dbReference>
<dbReference type="PROSITE" id="PS51161">
    <property type="entry name" value="ATP_CONE"/>
    <property type="match status" value="1"/>
</dbReference>
<dbReference type="PROSITE" id="PS00089">
    <property type="entry name" value="RIBORED_LARGE"/>
    <property type="match status" value="1"/>
</dbReference>
<name>RIR3_YEAST</name>
<comment type="function">
    <text evidence="6">Provides the precursors necessary for DNA synthesis. Catalyzes the biosynthesis of deoxyribonucleotides from the corresponding ribonucleotides.</text>
</comment>
<comment type="catalytic activity">
    <reaction>
        <text>a 2'-deoxyribonucleoside 5'-diphosphate + [thioredoxin]-disulfide + H2O = a ribonucleoside 5'-diphosphate + [thioredoxin]-dithiol</text>
        <dbReference type="Rhea" id="RHEA:23252"/>
        <dbReference type="Rhea" id="RHEA-COMP:10698"/>
        <dbReference type="Rhea" id="RHEA-COMP:10700"/>
        <dbReference type="ChEBI" id="CHEBI:15377"/>
        <dbReference type="ChEBI" id="CHEBI:29950"/>
        <dbReference type="ChEBI" id="CHEBI:50058"/>
        <dbReference type="ChEBI" id="CHEBI:57930"/>
        <dbReference type="ChEBI" id="CHEBI:73316"/>
        <dbReference type="EC" id="1.17.4.1"/>
    </reaction>
</comment>
<comment type="activity regulation">
    <text evidence="1">Under complex allosteric control mediated by deoxynucleoside triphosphates and ATP binding to separate specificity and activation sites on the large subunit. The type of nucleotide bound at the specificity site determines substrate preference. It seems probable that ATP makes the enzyme reduce CDP and UDP, dGTP favors ADP reduction and dTTP favors GDP reduction. Stimulated by ATP and inhibited by dATP binding to the activity site (By similarity).</text>
</comment>
<comment type="subunit">
    <text>Heterotetramer of two large (R1) and two small (R2) subunits. S.cerevisiae has two different R1 subunits (RNR1 and RNR3) and two different R2 subunits (RNR2 and RNR4). The functional form of the small subunits is a RNR2-RNR4 heterodimer, where RNR2 provides the iron-radical center and RNR4 is required for proper folding of RNR2 and assembly with the large subunits. Under normal growth conditions, the active form of the large subunits is a homodimer of the constitutively expressed RNR1. In damaged cells or cells arrested for DNA synthesis, the reductase consists of multiple species because of the association of the small subunits (RNR2-RNR4) with either the RNR1 homodimer or a heterodimer of RNR1 and the damage-inducible RNR3.</text>
</comment>
<comment type="subcellular location">
    <subcellularLocation>
        <location evidence="7">Cytoplasm</location>
    </subcellularLocation>
</comment>
<comment type="induction">
    <text evidence="9 10">Highly induced by DNA-damage.</text>
</comment>
<comment type="miscellaneous">
    <text evidence="1">Two distinct regulatory sites have been defined: the specificity site, which controls substrate specificity, and the activity site which regulates overall catalytic activity. A substrate-binding catalytic site, located on R1, is formed only in the presence of the second subunit R2 (By similarity).</text>
</comment>
<comment type="miscellaneous">
    <text evidence="8">Present with 1364 molecules/cell in log phase SD medium.</text>
</comment>
<comment type="similarity">
    <text evidence="11">Belongs to the ribonucleoside diphosphate reductase large chain family.</text>
</comment>
<comment type="sequence caution" evidence="11">
    <conflict type="frameshift">
        <sequence resource="EMBL-CDS" id="AAA34569"/>
    </conflict>
</comment>
<comment type="sequence caution" evidence="11">
    <conflict type="erroneous initiation">
        <sequence resource="EMBL-CDS" id="CAA86157"/>
    </conflict>
    <text>Extended N-terminus.</text>
</comment>
<protein>
    <recommendedName>
        <fullName>Ribonucleoside-diphosphate reductase large chain 2</fullName>
        <ecNumber>1.17.4.1</ecNumber>
    </recommendedName>
    <alternativeName>
        <fullName>Ribonucleotide reductase DNA damage-inducible regulatory subunit 2</fullName>
    </alternativeName>
    <alternativeName>
        <fullName>Ribonucleotide reductase R1 subunit 2</fullName>
    </alternativeName>
    <alternativeName>
        <fullName>Ribonucleotide reductase large subunit 2</fullName>
    </alternativeName>
</protein>
<gene>
    <name type="primary">RNR3</name>
    <name type="synonym">DIN1</name>
    <name type="ordered locus">YIL066C</name>
</gene>
<feature type="chain" id="PRO_0000187204" description="Ribonucleoside-diphosphate reductase large chain 2">
    <location>
        <begin position="1"/>
        <end position="869"/>
    </location>
</feature>
<feature type="domain" description="ATP-cone" evidence="4">
    <location>
        <begin position="1"/>
        <end position="92"/>
    </location>
</feature>
<feature type="region of interest" description="Disordered" evidence="5">
    <location>
        <begin position="793"/>
        <end position="843"/>
    </location>
</feature>
<feature type="compositionally biased region" description="Low complexity" evidence="5">
    <location>
        <begin position="806"/>
        <end position="820"/>
    </location>
</feature>
<feature type="active site" description="Proton acceptor" evidence="1">
    <location>
        <position position="426"/>
    </location>
</feature>
<feature type="active site" description="Cysteine radical intermediate" evidence="1">
    <location>
        <position position="428"/>
    </location>
</feature>
<feature type="active site" description="Proton acceptor" evidence="1">
    <location>
        <position position="430"/>
    </location>
</feature>
<feature type="binding site" evidence="3">
    <location>
        <begin position="5"/>
        <end position="6"/>
    </location>
    <ligand>
        <name>ATP</name>
        <dbReference type="ChEBI" id="CHEBI:30616"/>
        <note>allosteric activator</note>
    </ligand>
</feature>
<feature type="binding site" evidence="3">
    <location>
        <begin position="11"/>
        <end position="17"/>
    </location>
    <ligand>
        <name>ATP</name>
        <dbReference type="ChEBI" id="CHEBI:30616"/>
        <note>allosteric activator</note>
    </ligand>
</feature>
<feature type="binding site" evidence="3">
    <location>
        <position position="53"/>
    </location>
    <ligand>
        <name>ATP</name>
        <dbReference type="ChEBI" id="CHEBI:30616"/>
        <note>allosteric activator</note>
    </ligand>
</feature>
<feature type="binding site" evidence="3">
    <location>
        <position position="57"/>
    </location>
    <ligand>
        <name>ATP</name>
        <dbReference type="ChEBI" id="CHEBI:30616"/>
        <note>allosteric activator</note>
    </ligand>
</feature>
<feature type="binding site" evidence="3">
    <location>
        <position position="202"/>
    </location>
    <ligand>
        <name>GDP</name>
        <dbReference type="ChEBI" id="CHEBI:58189"/>
    </ligand>
</feature>
<feature type="binding site" evidence="3">
    <location>
        <position position="217"/>
    </location>
    <ligand>
        <name>GDP</name>
        <dbReference type="ChEBI" id="CHEBI:58189"/>
    </ligand>
</feature>
<feature type="binding site" evidence="3">
    <location>
        <begin position="226"/>
        <end position="228"/>
    </location>
    <ligand>
        <name>dTTP</name>
        <dbReference type="ChEBI" id="CHEBI:37568"/>
        <note>allosteric effector that controls substrate specificity</note>
    </ligand>
</feature>
<feature type="binding site" evidence="3">
    <location>
        <position position="243"/>
    </location>
    <ligand>
        <name>dTTP</name>
        <dbReference type="ChEBI" id="CHEBI:37568"/>
        <note>allosteric effector that controls substrate specificity</note>
    </ligand>
</feature>
<feature type="binding site" evidence="3">
    <location>
        <position position="256"/>
    </location>
    <ligand>
        <name>dTTP</name>
        <dbReference type="ChEBI" id="CHEBI:37568"/>
        <note>allosteric effector that controls substrate specificity</note>
    </ligand>
</feature>
<feature type="binding site" evidence="3">
    <location>
        <begin position="263"/>
        <end position="264"/>
    </location>
    <ligand>
        <name>dTTP</name>
        <dbReference type="ChEBI" id="CHEBI:37568"/>
        <note>allosteric effector that controls substrate specificity</note>
    </ligand>
</feature>
<feature type="binding site" evidence="3">
    <location>
        <position position="426"/>
    </location>
    <ligand>
        <name>GDP</name>
        <dbReference type="ChEBI" id="CHEBI:58189"/>
    </ligand>
</feature>
<feature type="binding site" evidence="3">
    <location>
        <position position="430"/>
    </location>
    <ligand>
        <name>GDP</name>
        <dbReference type="ChEBI" id="CHEBI:58189"/>
    </ligand>
</feature>
<feature type="binding site" evidence="3">
    <location>
        <begin position="608"/>
        <end position="611"/>
    </location>
    <ligand>
        <name>GDP</name>
        <dbReference type="ChEBI" id="CHEBI:58189"/>
    </ligand>
</feature>
<feature type="site" description="Important for hydrogen atom transfer" evidence="1">
    <location>
        <position position="218"/>
    </location>
</feature>
<feature type="site" description="Important for hydrogen atom transfer" evidence="1">
    <location>
        <position position="443"/>
    </location>
</feature>
<feature type="site" description="Important for electron transfer" evidence="1">
    <location>
        <position position="741"/>
    </location>
</feature>
<feature type="site" description="Important for electron transfer" evidence="1">
    <location>
        <position position="742"/>
    </location>
</feature>
<feature type="site" description="Interacts with thioredoxin/glutaredoxin" evidence="1">
    <location>
        <position position="864"/>
    </location>
</feature>
<feature type="site" description="Interacts with thioredoxin/glutaredoxin" evidence="1">
    <location>
        <position position="867"/>
    </location>
</feature>
<feature type="modified residue" description="Phosphoserine" evidence="2">
    <location>
        <position position="227"/>
    </location>
</feature>
<feature type="modified residue" description="Phosphoserine" evidence="12">
    <location>
        <position position="806"/>
    </location>
</feature>
<feature type="modified residue" description="Phosphoserine" evidence="2">
    <location>
        <position position="827"/>
    </location>
</feature>
<feature type="modified residue" description="Phosphoserine" evidence="2">
    <location>
        <position position="868"/>
    </location>
</feature>
<feature type="disulfide bond" description="Redox-active" evidence="1">
    <location>
        <begin position="218"/>
        <end position="443"/>
    </location>
</feature>
<feature type="cross-link" description="Glycyl lysine isopeptide (Lys-Gly) (interchain with G-Cter in ubiquitin)" evidence="2">
    <location>
        <position position="387"/>
    </location>
</feature>
<feature type="sequence conflict" description="In Ref. 4; no nucleotide entry." evidence="11" ref="4">
    <original>RI</original>
    <variation>VL</variation>
    <location>
        <begin position="21"/>
        <end position="22"/>
    </location>
</feature>
<feature type="sequence conflict" description="In Ref. 4; no nucleotide entry." evidence="11" ref="4">
    <original>V</original>
    <variation>F</variation>
    <location>
        <position position="37"/>
    </location>
</feature>
<feature type="sequence conflict" description="In Ref. 4; no nucleotide entry." evidence="11" ref="4">
    <original>N</original>
    <variation>I</variation>
    <location>
        <position position="58"/>
    </location>
</feature>
<feature type="sequence conflict" description="In Ref. 4; no nucleotide entry." evidence="11" ref="4">
    <original>T</original>
    <variation>H</variation>
    <location>
        <position position="69"/>
    </location>
</feature>
<feature type="sequence conflict" description="In Ref. 4; no nucleotide entry." evidence="11" ref="4">
    <original>I</original>
    <variation>T</variation>
    <location>
        <position position="83"/>
    </location>
</feature>
<feature type="sequence conflict" description="In Ref. 3; AAA34569." evidence="11" ref="3">
    <original>H</original>
    <variation>L</variation>
    <location>
        <position position="212"/>
    </location>
</feature>
<feature type="sequence conflict" description="In Ref. 3; AAA34569." evidence="11" ref="3">
    <original>G</original>
    <variation>V</variation>
    <location>
        <position position="249"/>
    </location>
</feature>
<feature type="sequence conflict" description="In Ref. 3; AAA34569." evidence="11" ref="3">
    <original>F</original>
    <variation>K</variation>
    <location>
        <position position="311"/>
    </location>
</feature>
<evidence type="ECO:0000250" key="1"/>
<evidence type="ECO:0000250" key="2">
    <source>
        <dbReference type="UniProtKB" id="P21524"/>
    </source>
</evidence>
<evidence type="ECO:0000250" key="3">
    <source>
        <dbReference type="UniProtKB" id="P23921"/>
    </source>
</evidence>
<evidence type="ECO:0000255" key="4">
    <source>
        <dbReference type="PROSITE-ProRule" id="PRU00492"/>
    </source>
</evidence>
<evidence type="ECO:0000256" key="5">
    <source>
        <dbReference type="SAM" id="MobiDB-lite"/>
    </source>
</evidence>
<evidence type="ECO:0000269" key="6">
    <source>
    </source>
</evidence>
<evidence type="ECO:0000269" key="7">
    <source>
    </source>
</evidence>
<evidence type="ECO:0000269" key="8">
    <source>
    </source>
</evidence>
<evidence type="ECO:0000269" key="9">
    <source>
    </source>
</evidence>
<evidence type="ECO:0000269" key="10">
    <source>
    </source>
</evidence>
<evidence type="ECO:0000305" key="11"/>
<evidence type="ECO:0007744" key="12">
    <source>
    </source>
</evidence>
<sequence length="869" mass="97515">MYVIKRDGRKEPVQFDKITSRITRLSYGLDPNRIDAVKVTQRIISGVYSGVTTVELDNLAAETCAYMTTVHPDYATLAARIAISNLHKQTTKQFSKVIEDLHDWINPATGKHAPMISDEIYNIVMENKDTLNSAIVYDRDFQYTYFGFKTLERSYLLRLNGEVAERPQHLVMRVALGIHGSDIESVLKTYNLMSLRYFTHASPTLFNAGTPHPQMSSCFLIAMKDDSIEGIYDTLKECAMISKTAGGVGLHINNIRSTGSYIAGTNGTSNGLIPMIRVFNNTARYVDQGGNKRPGAFALFLEPWHADIFDFVDIRKTHGKEEIRARDLFPALWIPDLFMKRVQEDGPWTLFSPSAAPGLDDVWGDEFEELYTRYEREGRGKTIKAQKLWYAILQAQTETGTPFMVYKDACNRKTNQQNLGTIKSSNLCCEIVEYSSPDETAVCNLASIALPAFVEVSEDGKTASYNFERLHEIAKVITHNLNRVIDRNYYPVPEARNSNMKHRPIALGVQGLADTYMMLRLPFESEEAQTLNKQIFETIYHATLEASCELAQKEGKYSTFEGSPASKGILQFDMWNAKPFGMWDWETLRKDIVKHGLRNSLTMAPMPTASTSQILGYNECFEPVTSNMYSRRVLSGEFQVVNPYLLRDLVDLGIWDDSMKQYLITQNGSIQGLPNVPQELKELYKTVWEISQKTIINMAADRAIYIDQSHSLNLFLQAPSMGKITSMHFYGWKKGLKTGMYYLRTQAASAAIQFTIDQEVADQAATHIASVSELDRPVYVPKGTKFSEQKAASALTESSDNEKDASPVPSEQSSVSSAMSNVKLEDSVAPAVPTETIKEDSDEKKCDIYNEKVIACTAPTPEACESCSG</sequence>
<organism>
    <name type="scientific">Saccharomyces cerevisiae (strain ATCC 204508 / S288c)</name>
    <name type="common">Baker's yeast</name>
    <dbReference type="NCBI Taxonomy" id="559292"/>
    <lineage>
        <taxon>Eukaryota</taxon>
        <taxon>Fungi</taxon>
        <taxon>Dikarya</taxon>
        <taxon>Ascomycota</taxon>
        <taxon>Saccharomycotina</taxon>
        <taxon>Saccharomycetes</taxon>
        <taxon>Saccharomycetales</taxon>
        <taxon>Saccharomycetaceae</taxon>
        <taxon>Saccharomyces</taxon>
    </lineage>
</organism>
<reference key="1">
    <citation type="journal article" date="1997" name="Nature">
        <title>The nucleotide sequence of Saccharomyces cerevisiae chromosome IX.</title>
        <authorList>
            <person name="Churcher C.M."/>
            <person name="Bowman S."/>
            <person name="Badcock K."/>
            <person name="Bankier A.T."/>
            <person name="Brown D."/>
            <person name="Chillingworth T."/>
            <person name="Connor R."/>
            <person name="Devlin K."/>
            <person name="Gentles S."/>
            <person name="Hamlin N."/>
            <person name="Harris D.E."/>
            <person name="Horsnell T."/>
            <person name="Hunt S."/>
            <person name="Jagels K."/>
            <person name="Jones M."/>
            <person name="Lye G."/>
            <person name="Moule S."/>
            <person name="Odell C."/>
            <person name="Pearson D."/>
            <person name="Rajandream M.A."/>
            <person name="Rice P."/>
            <person name="Rowley N."/>
            <person name="Skelton J."/>
            <person name="Smith V."/>
            <person name="Walsh S.V."/>
            <person name="Whitehead S."/>
            <person name="Barrell B.G."/>
        </authorList>
    </citation>
    <scope>NUCLEOTIDE SEQUENCE [LARGE SCALE GENOMIC DNA]</scope>
    <source>
        <strain>ATCC 204508 / S288c</strain>
    </source>
</reference>
<reference key="2">
    <citation type="journal article" date="2014" name="G3 (Bethesda)">
        <title>The reference genome sequence of Saccharomyces cerevisiae: Then and now.</title>
        <authorList>
            <person name="Engel S.R."/>
            <person name="Dietrich F.S."/>
            <person name="Fisk D.G."/>
            <person name="Binkley G."/>
            <person name="Balakrishnan R."/>
            <person name="Costanzo M.C."/>
            <person name="Dwight S.S."/>
            <person name="Hitz B.C."/>
            <person name="Karra K."/>
            <person name="Nash R.S."/>
            <person name="Weng S."/>
            <person name="Wong E.D."/>
            <person name="Lloyd P."/>
            <person name="Skrzypek M.S."/>
            <person name="Miyasato S.R."/>
            <person name="Simison M."/>
            <person name="Cherry J.M."/>
        </authorList>
    </citation>
    <scope>GENOME REANNOTATION</scope>
    <source>
        <strain>ATCC 204508 / S288c</strain>
    </source>
</reference>
<reference key="3">
    <citation type="journal article" date="1990" name="Mol. Cell. Biol.">
        <title>The DNA damage-inducible gene DIN1 of Saccharomyces cerevisiae encodes a regulatory subunit of ribonucleotide reductase and is identical to RNR3.</title>
        <authorList>
            <person name="Yagle K."/>
            <person name="McEntee K."/>
        </authorList>
    </citation>
    <scope>NUCLEOTIDE SEQUENCE [GENOMIC DNA] OF 1-758</scope>
    <scope>INDUCTION</scope>
</reference>
<reference key="4">
    <citation type="journal article" date="1990" name="Genes Dev.">
        <title>Two genes differentially regulated in the cell cycle and by DNA-damaging agents encode alternative regulatory subunits of ribonucleotide reductase.</title>
        <authorList>
            <person name="Elledge S.J."/>
            <person name="Davis R.W."/>
        </authorList>
    </citation>
    <scope>NUCLEOTIDE SEQUENCE [GENOMIC DNA] OF 1-101 AND 652-711</scope>
    <scope>INDUCTION</scope>
</reference>
<reference key="5">
    <citation type="journal article" date="2002" name="J. Biol. Chem.">
        <title>Yeast DNA damage-inducible Rnr3 has a very low catalytic activity strongly stimulated after the formation of a cross-talking Rnr1/Rnr3 complex.</title>
        <authorList>
            <person name="Domkin V."/>
            <person name="Thelander L."/>
            <person name="Chabes A."/>
        </authorList>
    </citation>
    <scope>FUNCTION</scope>
</reference>
<reference key="6">
    <citation type="journal article" date="2003" name="Nature">
        <title>Global analysis of protein expression in yeast.</title>
        <authorList>
            <person name="Ghaemmaghami S."/>
            <person name="Huh W.-K."/>
            <person name="Bower K."/>
            <person name="Howson R.W."/>
            <person name="Belle A."/>
            <person name="Dephoure N."/>
            <person name="O'Shea E.K."/>
            <person name="Weissman J.S."/>
        </authorList>
    </citation>
    <scope>LEVEL OF PROTEIN EXPRESSION [LARGE SCALE ANALYSIS]</scope>
</reference>
<reference key="7">
    <citation type="journal article" date="2003" name="Proc. Natl. Acad. Sci. U.S.A.">
        <title>Subcellular localization of yeast ribonucleotide reductase regulated by the DNA replication and damage checkpoint pathways.</title>
        <authorList>
            <person name="Yao R."/>
            <person name="Zhang Z."/>
            <person name="An X."/>
            <person name="Bucci B."/>
            <person name="Perlstein D.L."/>
            <person name="Stubbe J."/>
            <person name="Huang M."/>
        </authorList>
    </citation>
    <scope>SUBCELLULAR LOCATION</scope>
</reference>
<reference key="8">
    <citation type="journal article" date="2008" name="Mol. Cell. Proteomics">
        <title>A multidimensional chromatography technology for in-depth phosphoproteome analysis.</title>
        <authorList>
            <person name="Albuquerque C.P."/>
            <person name="Smolka M.B."/>
            <person name="Payne S.H."/>
            <person name="Bafna V."/>
            <person name="Eng J."/>
            <person name="Zhou H."/>
        </authorList>
    </citation>
    <scope>PHOSPHORYLATION [LARGE SCALE ANALYSIS] AT SER-806</scope>
    <scope>IDENTIFICATION BY MASS SPECTROMETRY [LARGE SCALE ANALYSIS]</scope>
</reference>
<keyword id="KW-0021">Allosteric enzyme</keyword>
<keyword id="KW-0067">ATP-binding</keyword>
<keyword id="KW-0963">Cytoplasm</keyword>
<keyword id="KW-0215">Deoxyribonucleotide synthesis</keyword>
<keyword id="KW-1015">Disulfide bond</keyword>
<keyword id="KW-1017">Isopeptide bond</keyword>
<keyword id="KW-0547">Nucleotide-binding</keyword>
<keyword id="KW-0560">Oxidoreductase</keyword>
<keyword id="KW-0597">Phosphoprotein</keyword>
<keyword id="KW-1185">Reference proteome</keyword>
<keyword id="KW-0832">Ubl conjugation</keyword>
<accession>P21672</accession>
<accession>D6VVL8</accession>
<proteinExistence type="evidence at protein level"/>